<accession>Q9WC65</accession>
<organismHost>
    <name type="scientific">Homo sapiens</name>
    <name type="common">Human</name>
    <dbReference type="NCBI Taxonomy" id="9606"/>
</organismHost>
<evidence type="ECO:0000255" key="1">
    <source>
        <dbReference type="HAMAP-Rule" id="MF_04080"/>
    </source>
</evidence>
<keyword id="KW-0010">Activator</keyword>
<keyword id="KW-0014">AIDS</keyword>
<keyword id="KW-0053">Apoptosis</keyword>
<keyword id="KW-0131">Cell cycle</keyword>
<keyword id="KW-1079">Host G2/M cell cycle arrest by virus</keyword>
<keyword id="KW-1048">Host nucleus</keyword>
<keyword id="KW-0945">Host-virus interaction</keyword>
<keyword id="KW-0407">Ion channel</keyword>
<keyword id="KW-0406">Ion transport</keyword>
<keyword id="KW-1121">Modulation of host cell cycle by virus</keyword>
<keyword id="KW-0597">Phosphoprotein</keyword>
<keyword id="KW-0804">Transcription</keyword>
<keyword id="KW-0805">Transcription regulation</keyword>
<keyword id="KW-0813">Transport</keyword>
<keyword id="KW-1163">Viral penetration into host nucleus</keyword>
<keyword id="KW-0946">Virion</keyword>
<keyword id="KW-1160">Virus entry into host cell</keyword>
<reference key="1">
    <citation type="journal article" date="1999" name="AIDS Res. Hum. Retroviruses">
        <title>Virtually full-length sequences of HIV type 1 subtype J reference strains.</title>
        <authorList>
            <person name="Laukkanen T."/>
            <person name="Albert J."/>
            <person name="Liitsola K."/>
            <person name="Green S.D."/>
            <person name="Carr J.K."/>
            <person name="Leitner T."/>
            <person name="McCutchan F.E."/>
            <person name="Salminen M.O."/>
        </authorList>
    </citation>
    <scope>NUCLEOTIDE SEQUENCE [GENOMIC DNA]</scope>
</reference>
<feature type="chain" id="PRO_0000246763" description="Protein Vpr">
    <location>
        <begin position="1"/>
        <end position="96"/>
    </location>
</feature>
<feature type="region of interest" description="Homooligomerization" evidence="1">
    <location>
        <begin position="1"/>
        <end position="42"/>
    </location>
</feature>
<feature type="modified residue" description="Phosphoserine; by host" evidence="1">
    <location>
        <position position="79"/>
    </location>
</feature>
<feature type="modified residue" description="Phosphoserine; by host" evidence="1">
    <location>
        <position position="94"/>
    </location>
</feature>
<feature type="modified residue" description="Phosphoserine; by host" evidence="1">
    <location>
        <position position="96"/>
    </location>
</feature>
<dbReference type="EMBL" id="AF082395">
    <property type="protein sequence ID" value="AAD17769.1"/>
    <property type="molecule type" value="Genomic_DNA"/>
</dbReference>
<dbReference type="SMR" id="Q9WC65"/>
<dbReference type="Proteomes" id="UP000123434">
    <property type="component" value="Segment"/>
</dbReference>
<dbReference type="GO" id="GO:0043657">
    <property type="term" value="C:host cell"/>
    <property type="evidence" value="ECO:0007669"/>
    <property type="project" value="GOC"/>
</dbReference>
<dbReference type="GO" id="GO:0042025">
    <property type="term" value="C:host cell nucleus"/>
    <property type="evidence" value="ECO:0007669"/>
    <property type="project" value="UniProtKB-SubCell"/>
</dbReference>
<dbReference type="GO" id="GO:0043655">
    <property type="term" value="C:host extracellular space"/>
    <property type="evidence" value="ECO:0007669"/>
    <property type="project" value="UniProtKB-SubCell"/>
</dbReference>
<dbReference type="GO" id="GO:0044423">
    <property type="term" value="C:virion component"/>
    <property type="evidence" value="ECO:0007669"/>
    <property type="project" value="UniProtKB-UniRule"/>
</dbReference>
<dbReference type="GO" id="GO:0006351">
    <property type="term" value="P:DNA-templated transcription"/>
    <property type="evidence" value="ECO:0007669"/>
    <property type="project" value="UniProtKB-UniRule"/>
</dbReference>
<dbReference type="GO" id="GO:0034220">
    <property type="term" value="P:monoatomic ion transmembrane transport"/>
    <property type="evidence" value="ECO:0007669"/>
    <property type="project" value="UniProtKB-KW"/>
</dbReference>
<dbReference type="GO" id="GO:0051260">
    <property type="term" value="P:protein homooligomerization"/>
    <property type="evidence" value="ECO:0007669"/>
    <property type="project" value="UniProtKB-UniRule"/>
</dbReference>
<dbReference type="GO" id="GO:0006355">
    <property type="term" value="P:regulation of DNA-templated transcription"/>
    <property type="evidence" value="ECO:0007669"/>
    <property type="project" value="UniProtKB-UniRule"/>
</dbReference>
<dbReference type="GO" id="GO:0046718">
    <property type="term" value="P:symbiont entry into host cell"/>
    <property type="evidence" value="ECO:0007669"/>
    <property type="project" value="UniProtKB-KW"/>
</dbReference>
<dbReference type="GO" id="GO:0052151">
    <property type="term" value="P:symbiont-mediated activation of host apoptosis"/>
    <property type="evidence" value="ECO:0007669"/>
    <property type="project" value="UniProtKB-UniRule"/>
</dbReference>
<dbReference type="GO" id="GO:0039592">
    <property type="term" value="P:symbiont-mediated arrest of host cell cycle during G2/M transition"/>
    <property type="evidence" value="ECO:0007669"/>
    <property type="project" value="UniProtKB-UniRule"/>
</dbReference>
<dbReference type="GO" id="GO:0075732">
    <property type="term" value="P:viral penetration into host nucleus"/>
    <property type="evidence" value="ECO:0007669"/>
    <property type="project" value="UniProtKB-UniRule"/>
</dbReference>
<dbReference type="Gene3D" id="6.10.210.10">
    <property type="match status" value="1"/>
</dbReference>
<dbReference type="Gene3D" id="1.20.5.90">
    <property type="entry name" value="VpR/VpX protein, C-terminal domain"/>
    <property type="match status" value="1"/>
</dbReference>
<dbReference type="HAMAP" id="MF_04080">
    <property type="entry name" value="HIV_VPR"/>
    <property type="match status" value="1"/>
</dbReference>
<dbReference type="InterPro" id="IPR000012">
    <property type="entry name" value="RetroV_VpR/X"/>
</dbReference>
<dbReference type="Pfam" id="PF00522">
    <property type="entry name" value="VPR"/>
    <property type="match status" value="1"/>
</dbReference>
<dbReference type="PRINTS" id="PR00444">
    <property type="entry name" value="HIVVPRVPX"/>
</dbReference>
<comment type="function">
    <text evidence="1">During virus replication, may deplete host UNG protein, and incude G2-M cell cycle arrest. Acts by targeting specific host proteins for degradation by the 26S proteasome, through association with the cellular CUL4A-DDB1 E3 ligase complex by direct interaction with host VPRPB/DCAF-1. Cell cycle arrest reportedly occurs within hours of infection and is not blocked by antiviral agents, suggesting that it is initiated by the VPR carried into the virion. Additionally, VPR induces apoptosis in a cell cycle dependent manner suggesting that these two effects are mechanistically linked. Detected in the serum and cerebrospinal fluid of AIDS patient, VPR may also induce cell death to bystander cells.</text>
</comment>
<comment type="function">
    <text evidence="1">During virus entry, plays a role in the transport of the viral pre-integration (PIC) complex to the host nucleus. This function is crucial for viral infection of non-dividing macrophages. May act directly at the nuclear pore complex, by binding nucleoporins phenylalanine-glycine (FG)-repeat regions.</text>
</comment>
<comment type="subunit">
    <text evidence="1">Homooligomer, may form homodimer. Interacts with p6-gag region of the Pr55 Gag precursor protein through a (Leu-X-X)4 motif near the C-terminus of the P6gag protein. Interacts with host UNG. May interact with host RAD23A/HHR23A. Interacts with host VPRBP/DCAF1, leading to hijack the CUL4A-RBX1-DDB1-DCAF1/VPRBP complex, mediating ubiquitination of host proteins such as TERT and ZGPAT and arrest of the cell cycle in G2 phase.</text>
</comment>
<comment type="subcellular location">
    <subcellularLocation>
        <location evidence="1">Virion</location>
    </subcellularLocation>
    <subcellularLocation>
        <location evidence="1">Host nucleus</location>
    </subcellularLocation>
    <subcellularLocation>
        <location evidence="1">Host extracellular space</location>
    </subcellularLocation>
    <text evidence="1">Incorporation into virion is dependent on p6 GAG sequences. Lacks a canonical nuclear localization signal, thus import into nucleus may function independently of the human importin pathway. Detected in high quantity in the serum and cerebrospinal fluid of AIDS patient.</text>
</comment>
<comment type="PTM">
    <text evidence="1">Phosphorylated on several residues by host. These phosphorylations regulate VPR activity for the nuclear import of the HIV-1 pre-integration complex.</text>
</comment>
<comment type="miscellaneous">
    <text evidence="1">HIV-1 lineages are divided in three main groups, M (for Major), O (for Outlier), and N (for New, or Non-M, Non-O). The vast majority of strains found worldwide belong to the group M. Group O seems to be endemic to and largely confined to Cameroon and neighboring countries in West Central Africa, where these viruses represent a small minority of HIV-1 strains. The group N is represented by a limited number of isolates from Cameroonian persons. The group M is further subdivided in 9 clades or subtypes (A to D, F to H, J and K).</text>
</comment>
<comment type="similarity">
    <text evidence="1">Belongs to the HIV-1 VPR protein family.</text>
</comment>
<gene>
    <name evidence="1" type="primary">vpr</name>
</gene>
<sequence length="96" mass="11304">MEQAPEDQGPQREPYHEWTLELLEELKNEAVRHFPRPWLHGLGQYVYSTYGDTWEGVEAVIRILQQLLFIHFRIGCHHSRIGIIPQRRGRNGASRS</sequence>
<organism>
    <name type="scientific">Human immunodeficiency virus type 1 group M subtype J (isolate SE9173)</name>
    <name type="common">HIV-1</name>
    <dbReference type="NCBI Taxonomy" id="388904"/>
    <lineage>
        <taxon>Viruses</taxon>
        <taxon>Riboviria</taxon>
        <taxon>Pararnavirae</taxon>
        <taxon>Artverviricota</taxon>
        <taxon>Revtraviricetes</taxon>
        <taxon>Ortervirales</taxon>
        <taxon>Retroviridae</taxon>
        <taxon>Orthoretrovirinae</taxon>
        <taxon>Lentivirus</taxon>
        <taxon>Human immunodeficiency virus type 1</taxon>
    </lineage>
</organism>
<protein>
    <recommendedName>
        <fullName evidence="1">Protein Vpr</fullName>
    </recommendedName>
    <alternativeName>
        <fullName evidence="1">R ORF protein</fullName>
    </alternativeName>
    <alternativeName>
        <fullName evidence="1">Viral protein R</fullName>
    </alternativeName>
</protein>
<proteinExistence type="inferred from homology"/>
<name>VPR_HV1S9</name>